<dbReference type="EMBL" id="CP001029">
    <property type="protein sequence ID" value="ACB80179.1"/>
    <property type="molecule type" value="Genomic_DNA"/>
</dbReference>
<dbReference type="RefSeq" id="WP_012453923.1">
    <property type="nucleotide sequence ID" value="NC_010725.1"/>
</dbReference>
<dbReference type="SMR" id="B1ZKI7"/>
<dbReference type="STRING" id="441620.Mpop_2016"/>
<dbReference type="KEGG" id="mpo:Mpop_2016"/>
<dbReference type="eggNOG" id="COG0776">
    <property type="taxonomic scope" value="Bacteria"/>
</dbReference>
<dbReference type="HOGENOM" id="CLU_105066_1_1_5"/>
<dbReference type="OrthoDB" id="9797747at2"/>
<dbReference type="Proteomes" id="UP000007136">
    <property type="component" value="Chromosome"/>
</dbReference>
<dbReference type="GO" id="GO:0005829">
    <property type="term" value="C:cytosol"/>
    <property type="evidence" value="ECO:0007669"/>
    <property type="project" value="TreeGrafter"/>
</dbReference>
<dbReference type="GO" id="GO:0003677">
    <property type="term" value="F:DNA binding"/>
    <property type="evidence" value="ECO:0007669"/>
    <property type="project" value="UniProtKB-UniRule"/>
</dbReference>
<dbReference type="GO" id="GO:0030527">
    <property type="term" value="F:structural constituent of chromatin"/>
    <property type="evidence" value="ECO:0007669"/>
    <property type="project" value="InterPro"/>
</dbReference>
<dbReference type="GO" id="GO:0006310">
    <property type="term" value="P:DNA recombination"/>
    <property type="evidence" value="ECO:0007669"/>
    <property type="project" value="UniProtKB-UniRule"/>
</dbReference>
<dbReference type="GO" id="GO:0009893">
    <property type="term" value="P:positive regulation of metabolic process"/>
    <property type="evidence" value="ECO:0007669"/>
    <property type="project" value="UniProtKB-ARBA"/>
</dbReference>
<dbReference type="GO" id="GO:0006355">
    <property type="term" value="P:regulation of DNA-templated transcription"/>
    <property type="evidence" value="ECO:0007669"/>
    <property type="project" value="UniProtKB-UniRule"/>
</dbReference>
<dbReference type="GO" id="GO:0006417">
    <property type="term" value="P:regulation of translation"/>
    <property type="evidence" value="ECO:0007669"/>
    <property type="project" value="UniProtKB-UniRule"/>
</dbReference>
<dbReference type="CDD" id="cd13835">
    <property type="entry name" value="IHF_A"/>
    <property type="match status" value="1"/>
</dbReference>
<dbReference type="FunFam" id="4.10.520.10:FF:000010">
    <property type="entry name" value="Integration host factor subunit alpha"/>
    <property type="match status" value="1"/>
</dbReference>
<dbReference type="Gene3D" id="4.10.520.10">
    <property type="entry name" value="IHF-like DNA-binding proteins"/>
    <property type="match status" value="1"/>
</dbReference>
<dbReference type="HAMAP" id="MF_00380">
    <property type="entry name" value="IHF_alpha"/>
    <property type="match status" value="1"/>
</dbReference>
<dbReference type="InterPro" id="IPR000119">
    <property type="entry name" value="Hist_DNA-bd"/>
</dbReference>
<dbReference type="InterPro" id="IPR020816">
    <property type="entry name" value="Histone-like_DNA-bd_CS"/>
</dbReference>
<dbReference type="InterPro" id="IPR010992">
    <property type="entry name" value="IHF-like_DNA-bd_dom_sf"/>
</dbReference>
<dbReference type="InterPro" id="IPR005684">
    <property type="entry name" value="IHF_alpha"/>
</dbReference>
<dbReference type="NCBIfam" id="NF001401">
    <property type="entry name" value="PRK00285.1"/>
    <property type="match status" value="1"/>
</dbReference>
<dbReference type="PANTHER" id="PTHR33175">
    <property type="entry name" value="DNA-BINDING PROTEIN HU"/>
    <property type="match status" value="1"/>
</dbReference>
<dbReference type="PANTHER" id="PTHR33175:SF2">
    <property type="entry name" value="INTEGRATION HOST FACTOR SUBUNIT ALPHA"/>
    <property type="match status" value="1"/>
</dbReference>
<dbReference type="Pfam" id="PF00216">
    <property type="entry name" value="Bac_DNA_binding"/>
    <property type="match status" value="1"/>
</dbReference>
<dbReference type="PRINTS" id="PR01727">
    <property type="entry name" value="DNABINDINGHU"/>
</dbReference>
<dbReference type="SMART" id="SM00411">
    <property type="entry name" value="BHL"/>
    <property type="match status" value="1"/>
</dbReference>
<dbReference type="SUPFAM" id="SSF47729">
    <property type="entry name" value="IHF-like DNA-binding proteins"/>
    <property type="match status" value="1"/>
</dbReference>
<dbReference type="PROSITE" id="PS00045">
    <property type="entry name" value="HISTONE_LIKE"/>
    <property type="match status" value="1"/>
</dbReference>
<evidence type="ECO:0000255" key="1">
    <source>
        <dbReference type="HAMAP-Rule" id="MF_00380"/>
    </source>
</evidence>
<proteinExistence type="inferred from homology"/>
<organism>
    <name type="scientific">Methylorubrum populi (strain ATCC BAA-705 / NCIMB 13946 / BJ001)</name>
    <name type="common">Methylobacterium populi</name>
    <dbReference type="NCBI Taxonomy" id="441620"/>
    <lineage>
        <taxon>Bacteria</taxon>
        <taxon>Pseudomonadati</taxon>
        <taxon>Pseudomonadota</taxon>
        <taxon>Alphaproteobacteria</taxon>
        <taxon>Hyphomicrobiales</taxon>
        <taxon>Methylobacteriaceae</taxon>
        <taxon>Methylorubrum</taxon>
    </lineage>
</organism>
<reference key="1">
    <citation type="submission" date="2008-04" db="EMBL/GenBank/DDBJ databases">
        <title>Complete sequence of chromosome of Methylobacterium populi BJ001.</title>
        <authorList>
            <consortium name="US DOE Joint Genome Institute"/>
            <person name="Copeland A."/>
            <person name="Lucas S."/>
            <person name="Lapidus A."/>
            <person name="Glavina del Rio T."/>
            <person name="Dalin E."/>
            <person name="Tice H."/>
            <person name="Bruce D."/>
            <person name="Goodwin L."/>
            <person name="Pitluck S."/>
            <person name="Chertkov O."/>
            <person name="Brettin T."/>
            <person name="Detter J.C."/>
            <person name="Han C."/>
            <person name="Kuske C.R."/>
            <person name="Schmutz J."/>
            <person name="Larimer F."/>
            <person name="Land M."/>
            <person name="Hauser L."/>
            <person name="Kyrpides N."/>
            <person name="Mikhailova N."/>
            <person name="Marx C."/>
            <person name="Richardson P."/>
        </authorList>
    </citation>
    <scope>NUCLEOTIDE SEQUENCE [LARGE SCALE GENOMIC DNA]</scope>
    <source>
        <strain>ATCC BAA-705 / NCIMB 13946 / BJ001</strain>
    </source>
</reference>
<gene>
    <name evidence="1" type="primary">ihfA</name>
    <name evidence="1" type="synonym">himA</name>
    <name type="ordered locus">Mpop_2016</name>
</gene>
<accession>B1ZKI7</accession>
<protein>
    <recommendedName>
        <fullName evidence="1">Integration host factor subunit alpha</fullName>
        <shortName evidence="1">IHF-alpha</shortName>
    </recommendedName>
</protein>
<name>IHFA_METPB</name>
<keyword id="KW-0233">DNA recombination</keyword>
<keyword id="KW-0238">DNA-binding</keyword>
<keyword id="KW-0804">Transcription</keyword>
<keyword id="KW-0805">Transcription regulation</keyword>
<keyword id="KW-0810">Translation regulation</keyword>
<feature type="chain" id="PRO_1000122147" description="Integration host factor subunit alpha">
    <location>
        <begin position="1"/>
        <end position="108"/>
    </location>
</feature>
<comment type="function">
    <text evidence="1">This protein is one of the two subunits of integration host factor, a specific DNA-binding protein that functions in genetic recombination as well as in transcriptional and translational control.</text>
</comment>
<comment type="subunit">
    <text evidence="1">Heterodimer of an alpha and a beta chain.</text>
</comment>
<comment type="similarity">
    <text evidence="1">Belongs to the bacterial histone-like protein family.</text>
</comment>
<sequence>MAGKTVTRADLSEAVYQQVGLSRAESAALVETVLGEICNCLSSGETVKLSSFGSFVVRSKGKRIGRNPKTGVEVEIEPRQVMVFKPSNVLKARINGGHVNGLDADEDE</sequence>